<feature type="chain" id="PRO_0000190350" description="Recombination protein RecR">
    <location>
        <begin position="1"/>
        <end position="203"/>
    </location>
</feature>
<feature type="domain" description="Toprim" evidence="1">
    <location>
        <begin position="79"/>
        <end position="179"/>
    </location>
</feature>
<feature type="zinc finger region" description="C4-type" evidence="1">
    <location>
        <begin position="56"/>
        <end position="71"/>
    </location>
</feature>
<reference key="1">
    <citation type="journal article" date="1998" name="Nature">
        <title>Deciphering the biology of Mycobacterium tuberculosis from the complete genome sequence.</title>
        <authorList>
            <person name="Cole S.T."/>
            <person name="Brosch R."/>
            <person name="Parkhill J."/>
            <person name="Garnier T."/>
            <person name="Churcher C.M."/>
            <person name="Harris D.E."/>
            <person name="Gordon S.V."/>
            <person name="Eiglmeier K."/>
            <person name="Gas S."/>
            <person name="Barry C.E. III"/>
            <person name="Tekaia F."/>
            <person name="Badcock K."/>
            <person name="Basham D."/>
            <person name="Brown D."/>
            <person name="Chillingworth T."/>
            <person name="Connor R."/>
            <person name="Davies R.M."/>
            <person name="Devlin K."/>
            <person name="Feltwell T."/>
            <person name="Gentles S."/>
            <person name="Hamlin N."/>
            <person name="Holroyd S."/>
            <person name="Hornsby T."/>
            <person name="Jagels K."/>
            <person name="Krogh A."/>
            <person name="McLean J."/>
            <person name="Moule S."/>
            <person name="Murphy L.D."/>
            <person name="Oliver S."/>
            <person name="Osborne J."/>
            <person name="Quail M.A."/>
            <person name="Rajandream M.A."/>
            <person name="Rogers J."/>
            <person name="Rutter S."/>
            <person name="Seeger K."/>
            <person name="Skelton S."/>
            <person name="Squares S."/>
            <person name="Squares R."/>
            <person name="Sulston J.E."/>
            <person name="Taylor K."/>
            <person name="Whitehead S."/>
            <person name="Barrell B.G."/>
        </authorList>
    </citation>
    <scope>NUCLEOTIDE SEQUENCE [LARGE SCALE GENOMIC DNA]</scope>
    <source>
        <strain>ATCC 25618 / H37Rv</strain>
    </source>
</reference>
<reference key="2">
    <citation type="journal article" date="2011" name="Mol. Cell. Proteomics">
        <title>Proteogenomic analysis of Mycobacterium tuberculosis by high resolution mass spectrometry.</title>
        <authorList>
            <person name="Kelkar D.S."/>
            <person name="Kumar D."/>
            <person name="Kumar P."/>
            <person name="Balakrishnan L."/>
            <person name="Muthusamy B."/>
            <person name="Yadav A.K."/>
            <person name="Shrivastava P."/>
            <person name="Marimuthu A."/>
            <person name="Anand S."/>
            <person name="Sundaram H."/>
            <person name="Kingsbury R."/>
            <person name="Harsha H.C."/>
            <person name="Nair B."/>
            <person name="Prasad T.S."/>
            <person name="Chauhan D.S."/>
            <person name="Katoch K."/>
            <person name="Katoch V.M."/>
            <person name="Kumar P."/>
            <person name="Chaerkady R."/>
            <person name="Ramachandran S."/>
            <person name="Dash D."/>
            <person name="Pandey A."/>
        </authorList>
    </citation>
    <scope>IDENTIFICATION BY MASS SPECTROMETRY [LARGE SCALE ANALYSIS]</scope>
    <source>
        <strain>ATCC 25618 / H37Rv</strain>
    </source>
</reference>
<evidence type="ECO:0000255" key="1">
    <source>
        <dbReference type="HAMAP-Rule" id="MF_00017"/>
    </source>
</evidence>
<proteinExistence type="evidence at protein level"/>
<comment type="function">
    <text evidence="1">May play a role in DNA repair. It seems to be involved in an RecBC-independent recombinational process of DNA repair. It may act with RecF and RecO.</text>
</comment>
<comment type="similarity">
    <text evidence="1">Belongs to the RecR family.</text>
</comment>
<keyword id="KW-0227">DNA damage</keyword>
<keyword id="KW-0233">DNA recombination</keyword>
<keyword id="KW-0234">DNA repair</keyword>
<keyword id="KW-0479">Metal-binding</keyword>
<keyword id="KW-1185">Reference proteome</keyword>
<keyword id="KW-0862">Zinc</keyword>
<keyword id="KW-0863">Zinc-finger</keyword>
<protein>
    <recommendedName>
        <fullName evidence="1">Recombination protein RecR</fullName>
    </recommendedName>
</protein>
<accession>P9WHI3</accession>
<accession>L0TGA9</accession>
<accession>O69682</accession>
<accession>P65990</accession>
<organism>
    <name type="scientific">Mycobacterium tuberculosis (strain ATCC 25618 / H37Rv)</name>
    <dbReference type="NCBI Taxonomy" id="83332"/>
    <lineage>
        <taxon>Bacteria</taxon>
        <taxon>Bacillati</taxon>
        <taxon>Actinomycetota</taxon>
        <taxon>Actinomycetes</taxon>
        <taxon>Mycobacteriales</taxon>
        <taxon>Mycobacteriaceae</taxon>
        <taxon>Mycobacterium</taxon>
        <taxon>Mycobacterium tuberculosis complex</taxon>
    </lineage>
</organism>
<sequence length="203" mass="22119">MFEGPVQDLIDELGKLPGIGPKSAQRIAFHLLSVEPSDIDRLTGVLAKVRDGVRFCAVCGNVSDNERCRICSDIRRDASVVCIVEEPKDIQAVERTREFRGRYHVLGGALDPLSGIGPDQLRIRELLSRIGERVDDVDVTEVIIATDPNTEGEATATYLVRMLRDIPGLTVTRIASGLPMGGDLEFADELTLGRALAGRRVLA</sequence>
<dbReference type="EMBL" id="AL123456">
    <property type="protein sequence ID" value="CCP46541.1"/>
    <property type="molecule type" value="Genomic_DNA"/>
</dbReference>
<dbReference type="PIR" id="D70795">
    <property type="entry name" value="D70795"/>
</dbReference>
<dbReference type="RefSeq" id="NP_218232.1">
    <property type="nucleotide sequence ID" value="NC_000962.3"/>
</dbReference>
<dbReference type="RefSeq" id="WP_003420407.1">
    <property type="nucleotide sequence ID" value="NZ_NVQJ01000009.1"/>
</dbReference>
<dbReference type="SMR" id="P9WHI3"/>
<dbReference type="FunCoup" id="P9WHI3">
    <property type="interactions" value="39"/>
</dbReference>
<dbReference type="STRING" id="83332.Rv3715c"/>
<dbReference type="PaxDb" id="83332-Rv3715c"/>
<dbReference type="DNASU" id="885307"/>
<dbReference type="GeneID" id="45427714"/>
<dbReference type="GeneID" id="885307"/>
<dbReference type="KEGG" id="mtu:Rv3715c"/>
<dbReference type="KEGG" id="mtv:RVBD_3715c"/>
<dbReference type="TubercuList" id="Rv3715c"/>
<dbReference type="eggNOG" id="COG0353">
    <property type="taxonomic scope" value="Bacteria"/>
</dbReference>
<dbReference type="InParanoid" id="P9WHI3"/>
<dbReference type="OrthoDB" id="9802672at2"/>
<dbReference type="PhylomeDB" id="P9WHI3"/>
<dbReference type="Proteomes" id="UP000001584">
    <property type="component" value="Chromosome"/>
</dbReference>
<dbReference type="GO" id="GO:0003677">
    <property type="term" value="F:DNA binding"/>
    <property type="evidence" value="ECO:0007669"/>
    <property type="project" value="UniProtKB-UniRule"/>
</dbReference>
<dbReference type="GO" id="GO:0008270">
    <property type="term" value="F:zinc ion binding"/>
    <property type="evidence" value="ECO:0007669"/>
    <property type="project" value="UniProtKB-KW"/>
</dbReference>
<dbReference type="GO" id="GO:0006302">
    <property type="term" value="P:double-strand break repair"/>
    <property type="evidence" value="ECO:0000318"/>
    <property type="project" value="GO_Central"/>
</dbReference>
<dbReference type="GO" id="GO:0000725">
    <property type="term" value="P:recombinational repair"/>
    <property type="evidence" value="ECO:0000318"/>
    <property type="project" value="GO_Central"/>
</dbReference>
<dbReference type="CDD" id="cd01025">
    <property type="entry name" value="TOPRIM_recR"/>
    <property type="match status" value="1"/>
</dbReference>
<dbReference type="Gene3D" id="3.30.60.80">
    <property type="match status" value="1"/>
</dbReference>
<dbReference type="Gene3D" id="3.40.1360.10">
    <property type="match status" value="1"/>
</dbReference>
<dbReference type="Gene3D" id="6.10.250.240">
    <property type="match status" value="1"/>
</dbReference>
<dbReference type="Gene3D" id="1.10.8.420">
    <property type="entry name" value="RecR Domain 1"/>
    <property type="match status" value="1"/>
</dbReference>
<dbReference type="HAMAP" id="MF_00017">
    <property type="entry name" value="RecR"/>
    <property type="match status" value="1"/>
</dbReference>
<dbReference type="InterPro" id="IPR000093">
    <property type="entry name" value="DNA_Rcmb_RecR"/>
</dbReference>
<dbReference type="InterPro" id="IPR003583">
    <property type="entry name" value="Hlx-hairpin-Hlx_DNA-bd_motif"/>
</dbReference>
<dbReference type="InterPro" id="IPR023627">
    <property type="entry name" value="Rcmb_RecR"/>
</dbReference>
<dbReference type="InterPro" id="IPR015967">
    <property type="entry name" value="Rcmb_RecR_Znf"/>
</dbReference>
<dbReference type="InterPro" id="IPR006171">
    <property type="entry name" value="TOPRIM_dom"/>
</dbReference>
<dbReference type="InterPro" id="IPR034137">
    <property type="entry name" value="TOPRIM_RecR"/>
</dbReference>
<dbReference type="NCBIfam" id="TIGR00615">
    <property type="entry name" value="recR"/>
    <property type="match status" value="1"/>
</dbReference>
<dbReference type="PANTHER" id="PTHR30446">
    <property type="entry name" value="RECOMBINATION PROTEIN RECR"/>
    <property type="match status" value="1"/>
</dbReference>
<dbReference type="PANTHER" id="PTHR30446:SF0">
    <property type="entry name" value="RECOMBINATION PROTEIN RECR"/>
    <property type="match status" value="1"/>
</dbReference>
<dbReference type="Pfam" id="PF21175">
    <property type="entry name" value="RecR_C"/>
    <property type="match status" value="1"/>
</dbReference>
<dbReference type="Pfam" id="PF21176">
    <property type="entry name" value="RecR_HhH"/>
    <property type="match status" value="1"/>
</dbReference>
<dbReference type="Pfam" id="PF02132">
    <property type="entry name" value="RecR_ZnF"/>
    <property type="match status" value="1"/>
</dbReference>
<dbReference type="Pfam" id="PF13662">
    <property type="entry name" value="Toprim_4"/>
    <property type="match status" value="1"/>
</dbReference>
<dbReference type="SMART" id="SM00278">
    <property type="entry name" value="HhH1"/>
    <property type="match status" value="1"/>
</dbReference>
<dbReference type="SMART" id="SM00493">
    <property type="entry name" value="TOPRIM"/>
    <property type="match status" value="1"/>
</dbReference>
<dbReference type="SUPFAM" id="SSF111304">
    <property type="entry name" value="Recombination protein RecR"/>
    <property type="match status" value="1"/>
</dbReference>
<dbReference type="PROSITE" id="PS01300">
    <property type="entry name" value="RECR"/>
    <property type="match status" value="1"/>
</dbReference>
<dbReference type="PROSITE" id="PS50880">
    <property type="entry name" value="TOPRIM"/>
    <property type="match status" value="1"/>
</dbReference>
<name>RECR_MYCTU</name>
<gene>
    <name evidence="1" type="primary">recR</name>
    <name type="ordered locus">Rv3715c</name>
    <name type="ORF">MTV025.063c</name>
</gene>